<dbReference type="EMBL" id="K03454">
    <property type="protein sequence ID" value="AAA44329.1"/>
    <property type="molecule type" value="Genomic_DNA"/>
</dbReference>
<dbReference type="SMR" id="P04581"/>
<dbReference type="GlyCosmos" id="P04581">
    <property type="glycosylation" value="31 sites, No reported glycans"/>
</dbReference>
<dbReference type="Reactome" id="R-HSA-5621480">
    <property type="pathway name" value="Dectin-2 family"/>
</dbReference>
<dbReference type="Proteomes" id="UP000007693">
    <property type="component" value="Segment"/>
</dbReference>
<dbReference type="GO" id="GO:0044175">
    <property type="term" value="C:host cell endosome membrane"/>
    <property type="evidence" value="ECO:0007669"/>
    <property type="project" value="UniProtKB-SubCell"/>
</dbReference>
<dbReference type="GO" id="GO:0020002">
    <property type="term" value="C:host cell plasma membrane"/>
    <property type="evidence" value="ECO:0007669"/>
    <property type="project" value="UniProtKB-SubCell"/>
</dbReference>
<dbReference type="GO" id="GO:0016020">
    <property type="term" value="C:membrane"/>
    <property type="evidence" value="ECO:0007669"/>
    <property type="project" value="UniProtKB-UniRule"/>
</dbReference>
<dbReference type="GO" id="GO:0019031">
    <property type="term" value="C:viral envelope"/>
    <property type="evidence" value="ECO:0007669"/>
    <property type="project" value="UniProtKB-KW"/>
</dbReference>
<dbReference type="GO" id="GO:0055036">
    <property type="term" value="C:virion membrane"/>
    <property type="evidence" value="ECO:0007669"/>
    <property type="project" value="UniProtKB-SubCell"/>
</dbReference>
<dbReference type="GO" id="GO:0005198">
    <property type="term" value="F:structural molecule activity"/>
    <property type="evidence" value="ECO:0007669"/>
    <property type="project" value="UniProtKB-UniRule"/>
</dbReference>
<dbReference type="GO" id="GO:0075512">
    <property type="term" value="P:clathrin-dependent endocytosis of virus by host cell"/>
    <property type="evidence" value="ECO:0007669"/>
    <property type="project" value="UniProtKB-UniRule"/>
</dbReference>
<dbReference type="GO" id="GO:0039654">
    <property type="term" value="P:fusion of virus membrane with host endosome membrane"/>
    <property type="evidence" value="ECO:0007669"/>
    <property type="project" value="UniProtKB-UniRule"/>
</dbReference>
<dbReference type="GO" id="GO:0019064">
    <property type="term" value="P:fusion of virus membrane with host plasma membrane"/>
    <property type="evidence" value="ECO:0007669"/>
    <property type="project" value="UniProtKB-UniRule"/>
</dbReference>
<dbReference type="GO" id="GO:1903908">
    <property type="term" value="P:positive regulation of plasma membrane raft polarization"/>
    <property type="evidence" value="ECO:0007669"/>
    <property type="project" value="UniProtKB-UniRule"/>
</dbReference>
<dbReference type="GO" id="GO:1903911">
    <property type="term" value="P:positive regulation of receptor clustering"/>
    <property type="evidence" value="ECO:0007669"/>
    <property type="project" value="UniProtKB-UniRule"/>
</dbReference>
<dbReference type="GO" id="GO:0019082">
    <property type="term" value="P:viral protein processing"/>
    <property type="evidence" value="ECO:0007669"/>
    <property type="project" value="UniProtKB-UniRule"/>
</dbReference>
<dbReference type="GO" id="GO:0019062">
    <property type="term" value="P:virion attachment to host cell"/>
    <property type="evidence" value="ECO:0007669"/>
    <property type="project" value="UniProtKB-UniRule"/>
</dbReference>
<dbReference type="CDD" id="cd09909">
    <property type="entry name" value="HIV-1-like_HR1-HR2"/>
    <property type="match status" value="1"/>
</dbReference>
<dbReference type="FunFam" id="1.10.287.210:FF:000001">
    <property type="entry name" value="Envelope glycoprotein gp160"/>
    <property type="match status" value="1"/>
</dbReference>
<dbReference type="FunFam" id="1.20.5.490:FF:000001">
    <property type="entry name" value="Envelope glycoprotein gp160"/>
    <property type="match status" value="1"/>
</dbReference>
<dbReference type="FunFam" id="2.170.40.20:FF:000002">
    <property type="entry name" value="Envelope glycoprotein gp160"/>
    <property type="match status" value="1"/>
</dbReference>
<dbReference type="FunFam" id="2.170.40.20:FF:000003">
    <property type="entry name" value="Envelope glycoprotein gp160"/>
    <property type="match status" value="1"/>
</dbReference>
<dbReference type="Gene3D" id="1.10.287.210">
    <property type="match status" value="1"/>
</dbReference>
<dbReference type="Gene3D" id="2.170.40.20">
    <property type="entry name" value="Human immunodeficiency virus 1, Gp160, envelope glycoprotein"/>
    <property type="match status" value="2"/>
</dbReference>
<dbReference type="Gene3D" id="1.20.5.490">
    <property type="entry name" value="Single helix bin"/>
    <property type="match status" value="1"/>
</dbReference>
<dbReference type="HAMAP" id="MF_04083">
    <property type="entry name" value="HIV_ENV"/>
    <property type="match status" value="1"/>
</dbReference>
<dbReference type="InterPro" id="IPR036377">
    <property type="entry name" value="Gp120_core_sf"/>
</dbReference>
<dbReference type="InterPro" id="IPR037527">
    <property type="entry name" value="Gp160"/>
</dbReference>
<dbReference type="InterPro" id="IPR000328">
    <property type="entry name" value="GP41-like"/>
</dbReference>
<dbReference type="InterPro" id="IPR000777">
    <property type="entry name" value="HIV1_Gp120"/>
</dbReference>
<dbReference type="Pfam" id="PF00516">
    <property type="entry name" value="GP120"/>
    <property type="match status" value="2"/>
</dbReference>
<dbReference type="Pfam" id="PF00517">
    <property type="entry name" value="GP41"/>
    <property type="match status" value="1"/>
</dbReference>
<dbReference type="SUPFAM" id="SSF56502">
    <property type="entry name" value="gp120 core"/>
    <property type="match status" value="2"/>
</dbReference>
<dbReference type="SUPFAM" id="SSF58069">
    <property type="entry name" value="Virus ectodomain"/>
    <property type="match status" value="1"/>
</dbReference>
<name>ENV_HV1EL</name>
<keyword id="KW-0014">AIDS</keyword>
<keyword id="KW-0053">Apoptosis</keyword>
<keyword id="KW-1165">Clathrin-mediated endocytosis of virus by host</keyword>
<keyword id="KW-0165">Cleavage on pair of basic residues</keyword>
<keyword id="KW-0175">Coiled coil</keyword>
<keyword id="KW-1015">Disulfide bond</keyword>
<keyword id="KW-1170">Fusion of virus membrane with host endosomal membrane</keyword>
<keyword id="KW-1168">Fusion of virus membrane with host membrane</keyword>
<keyword id="KW-0325">Glycoprotein</keyword>
<keyword id="KW-1032">Host cell membrane</keyword>
<keyword id="KW-1039">Host endosome</keyword>
<keyword id="KW-1043">Host membrane</keyword>
<keyword id="KW-0945">Host-virus interaction</keyword>
<keyword id="KW-0449">Lipoprotein</keyword>
<keyword id="KW-0472">Membrane</keyword>
<keyword id="KW-0564">Palmitate</keyword>
<keyword id="KW-1185">Reference proteome</keyword>
<keyword id="KW-0732">Signal</keyword>
<keyword id="KW-0812">Transmembrane</keyword>
<keyword id="KW-1133">Transmembrane helix</keyword>
<keyword id="KW-1161">Viral attachment to host cell</keyword>
<keyword id="KW-0261">Viral envelope protein</keyword>
<keyword id="KW-0899">Viral immunoevasion</keyword>
<keyword id="KW-1162">Viral penetration into host cytoplasm</keyword>
<keyword id="KW-0946">Virion</keyword>
<keyword id="KW-1164">Virus endocytosis by host</keyword>
<keyword id="KW-1160">Virus entry into host cell</keyword>
<sequence>MRARGIERNCQNWWKWGIMLLGILMTCSAADNLWVTVYYGVPVWKEATTTLFCASDAKSYETEAHNIWATHACVPTDPNPQEIALENVTENFNMWKNNMVEQMHEDIISLWDQSLKPCVKLTPLCVTLNCSDELRNNGTMGNNVTTEEKGMKNCSFNVTTVLKDKKQQVYALFYRLDIVPIDNDSSTNSTNYRLINCNTSAITQACPKVSFEPIPIHYCAPAGFAILKCRDKKFNGTGPCTNVSTVQCTHGIRPVVSTQLLLNGSLAEEEVIIRSENLTNNAKNIIAHLNESVKITCARPYQNTRQRTPIGLGQSLYTTRSRSIIGQAHCNISRAQWSKTLQQVARKLGTLLNKTIIKFKPSSGGDPEITTHSFNCGGEFFYCNTSGLFNSTWNISAWNNITESNNSTNTNITLQCRIKQIIKMVAGRKAIYAPPIERNILCSSNITGLLLTRDGGINNSTNETFRPGGGDMRDNWRSELYKYKVVQIEPLGVAPTRAKRRVVEREKRAIGLGAMFLGFLGAAGSTMGARSVTLTVQARQLMSGIVQQQNNLLRAIEAQQHLLQLTVWGIKQLQARILAVERYLKDQQLLGIWGCSGKHICTTNVPWNSSWSNRSLNEIWQNMTWMEWEREIDNYTGLIYSLIEESQTQQEKNEKELLELDKWASLWNWFSITQWLWYIKIFIMIIGGLIGLRIVFAVLSLVNRVRQGYSPLSFQTLLPAPRGPDRPEGTEEEGGERGRDRSVRLLNGFSALIWDDLRSLCLFSYHRLRDLILIAVRIVELLGRRGWDILKYLWNLLQYWSQELRNSASSLFDAIAIAVAEGTDRVIEIIQRACRAVLNIPRRIRQGLERSLL</sequence>
<organism>
    <name type="scientific">Human immunodeficiency virus type 1 group M subtype D (isolate ELI)</name>
    <name type="common">HIV-1</name>
    <dbReference type="NCBI Taxonomy" id="11689"/>
    <lineage>
        <taxon>Viruses</taxon>
        <taxon>Riboviria</taxon>
        <taxon>Pararnavirae</taxon>
        <taxon>Artverviricota</taxon>
        <taxon>Revtraviricetes</taxon>
        <taxon>Ortervirales</taxon>
        <taxon>Retroviridae</taxon>
        <taxon>Orthoretrovirinae</taxon>
        <taxon>Lentivirus</taxon>
        <taxon>Human immunodeficiency virus type 1</taxon>
    </lineage>
</organism>
<comment type="function">
    <molecule>Envelope glycoprotein gp160</molecule>
    <text evidence="1">Oligomerizes in the host endoplasmic reticulum into predominantly trimers. In a second time, gp160 transits in the host Golgi, where glycosylation is completed. The precursor is then proteolytically cleaved in the trans-Golgi and thereby activated by cellular furin or furin-like proteases to produce gp120 and gp41.</text>
</comment>
<comment type="function">
    <molecule>Surface protein gp120</molecule>
    <text evidence="1">Attaches the virus to the host lymphoid cell by binding to the primary receptor CD4. This interaction induces a structural rearrangement creating a high affinity binding site for a chemokine coreceptor like CXCR4 and/or CCR5. Acts as a ligand for CD209/DC-SIGN and CLEC4M/DC-SIGNR, which are respectively found on dendritic cells (DCs), and on endothelial cells of liver sinusoids and lymph node sinuses. These interactions allow capture of viral particles at mucosal surfaces by these cells and subsequent transmission to permissive cells. HIV subverts the migration properties of dendritic cells to gain access to CD4+ T-cells in lymph nodes. Virus transmission to permissive T-cells occurs either in trans (without DCs infection, through viral capture and transmission), or in cis (following DCs productive infection, through the usual CD4-gp120 interaction), thereby inducing a robust infection. In trans infection, bound virions remain infectious over days and it is proposed that they are not degraded, but protected in non-lysosomal acidic organelles within the DCs close to the cell membrane thus contributing to the viral infectious potential during DCs' migration from the periphery to the lymphoid tissues. On arrival at lymphoid tissues, intact virions recycle back to DCs' cell surface allowing virus transmission to CD4+ T-cells.</text>
</comment>
<comment type="function">
    <molecule>Transmembrane protein gp41</molecule>
    <text evidence="1">Acts as a class I viral fusion protein. Under the current model, the protein has at least 3 conformational states: pre-fusion native state, pre-hairpin intermediate state, and post-fusion hairpin state. During fusion of viral and target intracellular membranes, the coiled coil regions (heptad repeats) assume a trimer-of-hairpins structure, positioning the fusion peptide in close proximity to the C-terminal region of the ectodomain. The formation of this structure appears to drive apposition and subsequent fusion of viral and target cell membranes. Complete fusion occurs in host cell endosomes and is dynamin-dependent, however some lipid transfer might occur at the plasma membrane. The virus undergoes clathrin-dependent internalization long before endosomal fusion, thus minimizing the surface exposure of conserved viral epitopes during fusion and reducing the efficacy of inhibitors targeting these epitopes. Membranes fusion leads to delivery of the nucleocapsid into the cytoplasm.</text>
</comment>
<comment type="subunit">
    <molecule>Surface protein gp120</molecule>
    <text evidence="1">The mature envelope protein (Env) consists of a homotrimer of non-covalently associated gp120-gp41 heterodimers. The resulting complex protrudes from the virus surface as a spike. There seems to be as few as 10 spikes on the average virion. Interacts with host CD4, CCR5 and CXCR4. Gp120 also interacts with the C-type lectins CD209/DC-SIGN and CLEC4M/DC-SIGNR (collectively referred to as DC-SIGN(R)). Gp120 and gp41 interact with GalCer. Gp120 interacts with host ITGA4/ITGB7 complex; on CD4+ T-cells, this interaction results in rapid activation of integrin ITGAL/LFA-1, which facilitates efficient cell-to-cell spreading of HIV-1. Gp120 interacts with cell-associated heparan sulfate; this interaction increases virus infectivity on permissive cells and may be involved in infection of CD4- cells.</text>
</comment>
<comment type="subunit">
    <molecule>Transmembrane protein gp41</molecule>
    <text evidence="1">The mature envelope protein (Env) consists of a homotrimer of non-covalently associated gp120-gp41 heterodimers. The resulting complex protrudes from the virus surface as a spike. There seems to be as few as 10 spikes on the average virion.</text>
</comment>
<comment type="subcellular location">
    <molecule>Surface protein gp120</molecule>
    <subcellularLocation>
        <location evidence="1">Virion membrane</location>
        <topology evidence="1">Peripheral membrane protein</topology>
    </subcellularLocation>
    <subcellularLocation>
        <location evidence="1">Host cell membrane</location>
        <topology evidence="1">Peripheral membrane protein</topology>
    </subcellularLocation>
    <subcellularLocation>
        <location evidence="1">Host endosome membrane</location>
        <topology evidence="1">Single-pass type I membrane protein</topology>
    </subcellularLocation>
    <text evidence="1">The surface protein is not anchored to the viral envelope, but associates with the extravirion surface through its binding to TM. It is probably concentrated at the site of budding and incorporated into the virions possibly by contacts between the cytoplasmic tail of Env and the N-terminus of Gag.</text>
</comment>
<comment type="subcellular location">
    <molecule>Transmembrane protein gp41</molecule>
    <subcellularLocation>
        <location evidence="1">Virion membrane</location>
        <topology evidence="1">Single-pass type I membrane protein</topology>
    </subcellularLocation>
    <subcellularLocation>
        <location evidence="1">Host cell membrane</location>
        <topology evidence="1">Single-pass type I membrane protein</topology>
    </subcellularLocation>
    <subcellularLocation>
        <location evidence="1">Host endosome membrane</location>
        <topology evidence="1">Single-pass type I membrane protein</topology>
    </subcellularLocation>
    <text evidence="1">It is probably concentrated at the site of budding and incorporated into the virions possibly by contacts between the cytoplasmic tail of Env and the N-terminus of Gag.</text>
</comment>
<comment type="domain">
    <text evidence="1">Some of the most genetically diverse regions of the viral genome are present in Env. They are called variable regions 1 through 5 (V1 through V5). Coreceptor usage of gp120 is determined mainly by the primary structure of the third variable region (V3) in the outer domain of gp120. The sequence of V3 determines which coreceptor, CCR5 and/or CXCR4 (corresponding to R5/macrophage, X4/T cell and R5X4/T cell and macrophage tropism), is used to trigger the fusion potential of the Env complex, and hence which cells the virus can infect. Binding to CCR5 involves a region adjacent in addition to V3.</text>
</comment>
<comment type="domain">
    <text evidence="1">The membrane proximal external region (MPER) present in gp41 is a tryptophan-rich region recognized by the antibodies 2F5, Z13, and 4E10. MPER seems to play a role in fusion.</text>
</comment>
<comment type="domain">
    <text evidence="1">The 17 amino acids long immunosuppressive region is present in many retroviral envelope proteins. Synthetic peptides derived from this relatively conserved sequence inhibit immune function in vitro and in vivo.</text>
</comment>
<comment type="domain">
    <text evidence="1">The YXXL motif is involved in determining the exact site of viral release at the surface of infected mononuclear cells and promotes endocytosis. YXXL and di-leucine endocytosis motifs interact directly or indirectly with the clathrin adapter complexes, opperate independently, and their activities are not additive.</text>
</comment>
<comment type="domain">
    <text evidence="1">The CD4-binding region is targeted by the antibody b12.</text>
</comment>
<comment type="PTM">
    <text evidence="1">Highly glycosylated by host. The high number of glycan on the protein is reffered to as 'glycan shield' because it contributes to hide protein sequence from adaptive immune system.</text>
</comment>
<comment type="PTM">
    <text evidence="1">Palmitoylation of the transmembrane protein and of Env polyprotein (prior to its proteolytic cleavage) is essential for their association with host cell membrane lipid rafts. Palmitoylation is therefore required for envelope trafficking to classical lipid rafts, but not for viral replication.</text>
</comment>
<comment type="PTM">
    <text evidence="1">Specific enzymatic cleavages in vivo yield mature proteins. Envelope glycoproteins are synthesized as an inactive precursor that is heavily N-glycosylated and processed likely by host cell furin in the Golgi to yield the mature SU and TM proteins. The cleavage site between SU and TM requires the minimal sequence [KR]-X-[KR]-R. About 2 of the 9 disulfide bonds of gp41 are reduced by P4HB/PDI, following binding to CD4 receptor.</text>
</comment>
<comment type="miscellaneous">
    <text evidence="1">Inhibitors targeting HIV-1 viral envelope proteins are used as antiretroviral drugs. Attachment of virions to the cell surface via non-specific interactions and CD4 binding can be blocked by inhibitors that include cyanovirin-N, cyclotriazadisulfonamide analogs, PRO 2000, TNX 355 and PRO 542. In addition, BMS 806 can block CD4-induced conformational changes. Env interactions with the coreceptor molecules can be targeted by CCR5 antagonists including SCH-D, maraviroc (UK 427857) and aplaviroc (GW 873140), and the CXCR4 antagonist AMD 070. Fusion of viral and cellular membranes can be inhibited by peptides such as enfuvirtide and tifuvirtide (T 1249). Resistance to inhibitors associated with mutations in Env are observed. Most of the time, single mutations confer only a modest reduction in drug susceptibility. Combination of several mutations is usually required to develop a high-level drug resistance.</text>
</comment>
<comment type="miscellaneous">
    <text evidence="1">HIV-1 lineages are divided in three main groups, M (for Major), O (for Outlier), and N (for New, or Non-M, Non-O). The vast majority of strains found worldwide belong to the group M. Group O seems to be endemic to and largely confined to Cameroon and neighboring countries in West Central Africa, where these viruses represent a small minority of HIV-1 strains. The group N is represented by a limited number of isolates from Cameroonian persons. The group M is further subdivided in 9 clades or subtypes (A to D, F to H, J and K).</text>
</comment>
<comment type="similarity">
    <text evidence="1">Belongs to the HIV-1 env protein family.</text>
</comment>
<comment type="online information" name="hivdb">
    <link uri="https://hivdb.stanford.edu"/>
    <text>HIV drug resistance database</text>
</comment>
<comment type="online information" name="HIV drug resistance mutations">
    <link uri="https://www.iasusa.org/hiv-drug-resistance/hiv-drug-resistance-mutations/"/>
</comment>
<evidence type="ECO:0000255" key="1">
    <source>
        <dbReference type="HAMAP-Rule" id="MF_04083"/>
    </source>
</evidence>
<evidence type="ECO:0000256" key="2">
    <source>
        <dbReference type="SAM" id="MobiDB-lite"/>
    </source>
</evidence>
<organismHost>
    <name type="scientific">Homo sapiens</name>
    <name type="common">Human</name>
    <dbReference type="NCBI Taxonomy" id="9606"/>
</organismHost>
<proteinExistence type="inferred from homology"/>
<reference key="1">
    <citation type="journal article" date="1986" name="Cell">
        <title>Genetic variability of the AIDS virus: nucleotide sequence analysis of two isolates from African patients.</title>
        <authorList>
            <person name="Alizon M."/>
            <person name="Wain-Hobson S."/>
            <person name="Montagnier L."/>
            <person name="Sonigo P."/>
        </authorList>
    </citation>
    <scope>NUCLEOTIDE SEQUENCE [GENOMIC DNA]</scope>
</reference>
<reference key="2">
    <citation type="journal article" date="2003" name="APMIS">
        <title>Pathogens target DC-SIGN to influence their fate DC-SIGN functions as a pathogen receptor with broad specificity.</title>
        <authorList>
            <person name="Geijtenbeek T.B."/>
            <person name="van Kooyk Y."/>
        </authorList>
    </citation>
    <scope>REVIEW</scope>
</reference>
<reference key="3">
    <citation type="journal article" date="2003" name="Biochim. Biophys. Acta">
        <title>The HIV Env-mediated fusion reaction.</title>
        <authorList>
            <person name="Gallo S.A."/>
            <person name="Finnegan C.M."/>
            <person name="Viard M."/>
            <person name="Raviv Y."/>
            <person name="Dimitrov A."/>
            <person name="Rawat S.S."/>
            <person name="Puri A."/>
            <person name="Durell S."/>
            <person name="Blumenthal R."/>
        </authorList>
    </citation>
    <scope>REVIEW</scope>
</reference>
<reference key="4">
    <citation type="journal article" date="2005" name="Cell Death Differ.">
        <title>Mechanisms of apoptosis induction by the HIV-1 envelope.</title>
        <authorList>
            <person name="Perfettini J.-L."/>
            <person name="Castedo M."/>
            <person name="Roumier T."/>
            <person name="Andreau K."/>
            <person name="Nardacci R."/>
            <person name="Piacentini M."/>
            <person name="Kroemer G."/>
        </authorList>
    </citation>
    <scope>REVIEW</scope>
</reference>
<reference key="5">
    <citation type="journal article" date="2005" name="AIDS Res. Hum. Retroviruses">
        <title>V3: HIV's switch-hitter.</title>
        <authorList>
            <person name="Hartley O."/>
            <person name="Klasse P.J."/>
            <person name="Sattentau Q.J."/>
            <person name="Moore J.P."/>
        </authorList>
    </citation>
    <scope>REVIEW</scope>
</reference>
<reference key="6">
    <citation type="journal article" date="2005" name="Drugs">
        <title>Emerging drug targets for antiretroviral therapy.</title>
        <authorList>
            <person name="Reeves J.D."/>
            <person name="Piefer A.J."/>
        </authorList>
    </citation>
    <scope>REVIEW</scope>
</reference>
<reference key="7">
    <citation type="journal article" date="2006" name="EMBO J.">
        <title>HIV and the chemokine system: 10 years later.</title>
        <authorList>
            <person name="Lusso P."/>
        </authorList>
    </citation>
    <scope>REVIEW</scope>
</reference>
<feature type="signal peptide" evidence="1">
    <location>
        <begin position="1"/>
        <end position="31"/>
    </location>
</feature>
<feature type="chain" id="PRO_0000239477" description="Envelope glycoprotein gp160" evidence="1">
    <location>
        <begin position="32"/>
        <end position="853"/>
    </location>
</feature>
<feature type="chain" id="PRO_0000038394" description="Surface protein gp120" evidence="1">
    <location>
        <begin position="32"/>
        <end position="508"/>
    </location>
</feature>
<feature type="chain" id="PRO_0000038395" description="Transmembrane protein gp41" evidence="1">
    <location>
        <begin position="509"/>
        <end position="853"/>
    </location>
</feature>
<feature type="topological domain" description="Extracellular" evidence="1">
    <location>
        <begin position="32"/>
        <end position="681"/>
    </location>
</feature>
<feature type="transmembrane region" description="Helical" evidence="1">
    <location>
        <begin position="682"/>
        <end position="702"/>
    </location>
</feature>
<feature type="topological domain" description="Cytoplasmic" evidence="1">
    <location>
        <begin position="703"/>
        <end position="853"/>
    </location>
</feature>
<feature type="region of interest" description="V1" evidence="1">
    <location>
        <begin position="130"/>
        <end position="153"/>
    </location>
</feature>
<feature type="region of interest" description="V2" evidence="1">
    <location>
        <begin position="154"/>
        <end position="197"/>
    </location>
</feature>
<feature type="region of interest" description="V3" evidence="1">
    <location>
        <begin position="297"/>
        <end position="329"/>
    </location>
</feature>
<feature type="region of interest" description="CD4-binding loop" evidence="1">
    <location>
        <begin position="362"/>
        <end position="372"/>
    </location>
</feature>
<feature type="region of interest" description="V4" evidence="1">
    <location>
        <begin position="383"/>
        <end position="416"/>
    </location>
</feature>
<feature type="region of interest" description="V5">
    <location>
        <begin position="457"/>
        <end position="468"/>
    </location>
</feature>
<feature type="region of interest" description="V5" evidence="1">
    <location>
        <begin position="460"/>
        <end position="468"/>
    </location>
</feature>
<feature type="region of interest" description="Fusion peptide" evidence="1">
    <location>
        <begin position="509"/>
        <end position="529"/>
    </location>
</feature>
<feature type="region of interest" description="Immunosuppression" evidence="1">
    <location>
        <begin position="571"/>
        <end position="589"/>
    </location>
</feature>
<feature type="region of interest" description="MPER; binding to GalCer" evidence="1">
    <location>
        <begin position="659"/>
        <end position="680"/>
    </location>
</feature>
<feature type="region of interest" description="Disordered" evidence="2">
    <location>
        <begin position="716"/>
        <end position="738"/>
    </location>
</feature>
<feature type="coiled-coil region" evidence="1">
    <location>
        <begin position="630"/>
        <end position="664"/>
    </location>
</feature>
<feature type="short sequence motif" description="YXXL motif; contains endocytosis signal" evidence="1">
    <location>
        <begin position="709"/>
        <end position="712"/>
    </location>
</feature>
<feature type="short sequence motif" description="Di-leucine internalization motif" evidence="1">
    <location>
        <begin position="852"/>
        <end position="853"/>
    </location>
</feature>
<feature type="compositionally biased region" description="Basic and acidic residues" evidence="2">
    <location>
        <begin position="723"/>
        <end position="738"/>
    </location>
</feature>
<feature type="site" description="Cleavage; by host furin" evidence="1">
    <location>
        <begin position="508"/>
        <end position="509"/>
    </location>
</feature>
<feature type="lipid moiety-binding region" description="S-palmitoyl cysteine; by host" evidence="1">
    <location>
        <position position="761"/>
    </location>
</feature>
<feature type="lipid moiety-binding region" description="S-palmitoyl cysteine; by host" evidence="1">
    <location>
        <position position="834"/>
    </location>
</feature>
<feature type="glycosylation site" description="N-linked (GlcNAc...) asparagine; by host" evidence="1">
    <location>
        <position position="87"/>
    </location>
</feature>
<feature type="glycosylation site" description="N-linked (GlcNAc...) asparagine; by host" evidence="1">
    <location>
        <position position="129"/>
    </location>
</feature>
<feature type="glycosylation site" description="N-linked (GlcNAc...) asparagine; by host" evidence="1">
    <location>
        <position position="137"/>
    </location>
</feature>
<feature type="glycosylation site" description="N-linked (GlcNAc...) asparagine; by host" evidence="1">
    <location>
        <position position="143"/>
    </location>
</feature>
<feature type="glycosylation site" description="N-linked (GlcNAc...) asparagine; by host" evidence="1">
    <location>
        <position position="153"/>
    </location>
</feature>
<feature type="glycosylation site" description="N-linked (GlcNAc...) asparagine; by host" evidence="1">
    <location>
        <position position="157"/>
    </location>
</feature>
<feature type="glycosylation site" description="N-linked (GlcNAc...) asparagine; by host" evidence="1">
    <location>
        <position position="183"/>
    </location>
</feature>
<feature type="glycosylation site" description="N-linked (GlcNAc...) asparagine; by host" evidence="1">
    <location>
        <position position="188"/>
    </location>
</feature>
<feature type="glycosylation site" description="N-linked (GlcNAc...) asparagine; by host" evidence="1">
    <location>
        <position position="198"/>
    </location>
</feature>
<feature type="glycosylation site" description="N-linked (GlcNAc...) asparagine; by host" evidence="1">
    <location>
        <position position="235"/>
    </location>
</feature>
<feature type="glycosylation site" description="N-linked (GlcNAc...) asparagine; by host" evidence="1">
    <location>
        <position position="242"/>
    </location>
</feature>
<feature type="glycosylation site" description="N-linked (GlcNAc...) asparagine; by host" evidence="1">
    <location>
        <position position="263"/>
    </location>
</feature>
<feature type="glycosylation site" description="N-linked (GlcNAc...) asparagine; by host" evidence="1">
    <location>
        <position position="277"/>
    </location>
</feature>
<feature type="glycosylation site" description="N-linked (GlcNAc...) asparagine; by host" evidence="1">
    <location>
        <position position="290"/>
    </location>
</feature>
<feature type="glycosylation site" description="N-linked (GlcNAc...) asparagine; by host" evidence="1">
    <location>
        <position position="331"/>
    </location>
</feature>
<feature type="glycosylation site" description="N-linked (GlcNAc...) asparagine; by host" evidence="1">
    <location>
        <position position="353"/>
    </location>
</feature>
<feature type="glycosylation site" description="N-linked (GlcNAc...) asparagine; by host" evidence="1">
    <location>
        <position position="384"/>
    </location>
</feature>
<feature type="glycosylation site" description="N-linked (GlcNAc...) asparagine; by host" evidence="1">
    <location>
        <position position="390"/>
    </location>
</feature>
<feature type="glycosylation site" description="N-linked (GlcNAc...) asparagine; by host" evidence="1">
    <location>
        <position position="394"/>
    </location>
</feature>
<feature type="glycosylation site" description="N-linked (GlcNAc...) asparagine; by host" evidence="1">
    <location>
        <position position="400"/>
    </location>
</feature>
<feature type="glycosylation site" description="N-linked (GlcNAc...) asparagine; by host" evidence="1">
    <location>
        <position position="405"/>
    </location>
</feature>
<feature type="glycosylation site" description="N-linked (GlcNAc...) asparagine; by host" evidence="1">
    <location>
        <position position="406"/>
    </location>
</feature>
<feature type="glycosylation site" description="N-linked (GlcNAc...) asparagine; by host" evidence="1">
    <location>
        <position position="411"/>
    </location>
</feature>
<feature type="glycosylation site" description="N-linked (GlcNAc...) asparagine; by host" evidence="1">
    <location>
        <position position="445"/>
    </location>
</feature>
<feature type="glycosylation site" description="N-linked (GlcNAc...) asparagine; by host" evidence="1">
    <location>
        <position position="458"/>
    </location>
</feature>
<feature type="glycosylation site" description="N-linked (GlcNAc...) asparagine; by host" evidence="1">
    <location>
        <position position="459"/>
    </location>
</feature>
<feature type="glycosylation site" description="N-linked (GlcNAc...) asparagine; by host" evidence="1">
    <location>
        <position position="462"/>
    </location>
</feature>
<feature type="glycosylation site" description="N-linked (GlcNAc...) asparagine; by host" evidence="1">
    <location>
        <position position="608"/>
    </location>
</feature>
<feature type="glycosylation site" description="N-linked (GlcNAc...) asparagine; by host" evidence="1">
    <location>
        <position position="613"/>
    </location>
</feature>
<feature type="glycosylation site" description="N-linked (GlcNAc...) asparagine; by host" evidence="1">
    <location>
        <position position="622"/>
    </location>
</feature>
<feature type="glycosylation site" description="N-linked (GlcNAc...) asparagine; by host" evidence="1">
    <location>
        <position position="634"/>
    </location>
</feature>
<feature type="disulfide bond" evidence="1">
    <location>
        <begin position="53"/>
        <end position="73"/>
    </location>
</feature>
<feature type="disulfide bond" evidence="1">
    <location>
        <begin position="118"/>
        <end position="206"/>
    </location>
</feature>
<feature type="disulfide bond" evidence="1">
    <location>
        <begin position="125"/>
        <end position="197"/>
    </location>
</feature>
<feature type="disulfide bond" evidence="1">
    <location>
        <begin position="130"/>
        <end position="154"/>
    </location>
</feature>
<feature type="disulfide bond" evidence="1">
    <location>
        <begin position="219"/>
        <end position="248"/>
    </location>
</feature>
<feature type="disulfide bond" evidence="1">
    <location>
        <begin position="229"/>
        <end position="240"/>
    </location>
</feature>
<feature type="disulfide bond" evidence="1">
    <location>
        <begin position="297"/>
        <end position="330"/>
    </location>
</feature>
<feature type="disulfide bond" evidence="1">
    <location>
        <begin position="376"/>
        <end position="442"/>
    </location>
</feature>
<feature type="disulfide bond" evidence="1">
    <location>
        <begin position="383"/>
        <end position="416"/>
    </location>
</feature>
<feature type="disulfide bond" evidence="1">
    <location>
        <begin position="595"/>
        <end position="601"/>
    </location>
</feature>
<protein>
    <recommendedName>
        <fullName evidence="1">Envelope glycoprotein gp160</fullName>
    </recommendedName>
    <alternativeName>
        <fullName evidence="1">Env polyprotein</fullName>
    </alternativeName>
    <component>
        <recommendedName>
            <fullName evidence="1">Surface protein gp120</fullName>
            <shortName evidence="1">SU</shortName>
        </recommendedName>
        <alternativeName>
            <fullName evidence="1">Glycoprotein 120</fullName>
            <shortName evidence="1">gp120</shortName>
        </alternativeName>
    </component>
    <component>
        <recommendedName>
            <fullName evidence="1">Transmembrane protein gp41</fullName>
            <shortName evidence="1">TM</shortName>
        </recommendedName>
        <alternativeName>
            <fullName evidence="1">Glycoprotein 41</fullName>
            <shortName evidence="1">gp41</shortName>
        </alternativeName>
    </component>
</protein>
<gene>
    <name evidence="1" type="primary">env</name>
</gene>
<accession>P04581</accession>